<evidence type="ECO:0000255" key="1">
    <source>
        <dbReference type="HAMAP-Rule" id="MF_00235"/>
    </source>
</evidence>
<dbReference type="EC" id="2.7.4.3" evidence="1"/>
<dbReference type="EMBL" id="FM204884">
    <property type="protein sequence ID" value="CAW97681.1"/>
    <property type="molecule type" value="Genomic_DNA"/>
</dbReference>
<dbReference type="SMR" id="C0ME26"/>
<dbReference type="KEGG" id="seq:SZO_00710"/>
<dbReference type="eggNOG" id="COG0563">
    <property type="taxonomic scope" value="Bacteria"/>
</dbReference>
<dbReference type="HOGENOM" id="CLU_032354_1_2_9"/>
<dbReference type="UniPathway" id="UPA00588">
    <property type="reaction ID" value="UER00649"/>
</dbReference>
<dbReference type="Proteomes" id="UP000001368">
    <property type="component" value="Chromosome"/>
</dbReference>
<dbReference type="GO" id="GO:0005737">
    <property type="term" value="C:cytoplasm"/>
    <property type="evidence" value="ECO:0007669"/>
    <property type="project" value="UniProtKB-SubCell"/>
</dbReference>
<dbReference type="GO" id="GO:0004017">
    <property type="term" value="F:adenylate kinase activity"/>
    <property type="evidence" value="ECO:0007669"/>
    <property type="project" value="UniProtKB-UniRule"/>
</dbReference>
<dbReference type="GO" id="GO:0005524">
    <property type="term" value="F:ATP binding"/>
    <property type="evidence" value="ECO:0007669"/>
    <property type="project" value="UniProtKB-UniRule"/>
</dbReference>
<dbReference type="GO" id="GO:0044209">
    <property type="term" value="P:AMP salvage"/>
    <property type="evidence" value="ECO:0007669"/>
    <property type="project" value="UniProtKB-UniRule"/>
</dbReference>
<dbReference type="CDD" id="cd01428">
    <property type="entry name" value="ADK"/>
    <property type="match status" value="1"/>
</dbReference>
<dbReference type="FunFam" id="3.40.50.300:FF:000106">
    <property type="entry name" value="Adenylate kinase mitochondrial"/>
    <property type="match status" value="1"/>
</dbReference>
<dbReference type="Gene3D" id="3.40.50.300">
    <property type="entry name" value="P-loop containing nucleotide triphosphate hydrolases"/>
    <property type="match status" value="1"/>
</dbReference>
<dbReference type="HAMAP" id="MF_00235">
    <property type="entry name" value="Adenylate_kinase_Adk"/>
    <property type="match status" value="1"/>
</dbReference>
<dbReference type="InterPro" id="IPR006259">
    <property type="entry name" value="Adenyl_kin_sub"/>
</dbReference>
<dbReference type="InterPro" id="IPR000850">
    <property type="entry name" value="Adenylat/UMP-CMP_kin"/>
</dbReference>
<dbReference type="InterPro" id="IPR033690">
    <property type="entry name" value="Adenylat_kinase_CS"/>
</dbReference>
<dbReference type="InterPro" id="IPR027417">
    <property type="entry name" value="P-loop_NTPase"/>
</dbReference>
<dbReference type="NCBIfam" id="TIGR01351">
    <property type="entry name" value="adk"/>
    <property type="match status" value="1"/>
</dbReference>
<dbReference type="NCBIfam" id="NF001380">
    <property type="entry name" value="PRK00279.1-2"/>
    <property type="match status" value="1"/>
</dbReference>
<dbReference type="NCBIfam" id="NF001381">
    <property type="entry name" value="PRK00279.1-3"/>
    <property type="match status" value="1"/>
</dbReference>
<dbReference type="NCBIfam" id="NF001382">
    <property type="entry name" value="PRK00279.1-4"/>
    <property type="match status" value="1"/>
</dbReference>
<dbReference type="NCBIfam" id="NF011100">
    <property type="entry name" value="PRK14527.1"/>
    <property type="match status" value="1"/>
</dbReference>
<dbReference type="PANTHER" id="PTHR23359">
    <property type="entry name" value="NUCLEOTIDE KINASE"/>
    <property type="match status" value="1"/>
</dbReference>
<dbReference type="Pfam" id="PF00406">
    <property type="entry name" value="ADK"/>
    <property type="match status" value="1"/>
</dbReference>
<dbReference type="PRINTS" id="PR00094">
    <property type="entry name" value="ADENYLTKNASE"/>
</dbReference>
<dbReference type="SUPFAM" id="SSF52540">
    <property type="entry name" value="P-loop containing nucleoside triphosphate hydrolases"/>
    <property type="match status" value="1"/>
</dbReference>
<dbReference type="PROSITE" id="PS00113">
    <property type="entry name" value="ADENYLATE_KINASE"/>
    <property type="match status" value="1"/>
</dbReference>
<keyword id="KW-0067">ATP-binding</keyword>
<keyword id="KW-0963">Cytoplasm</keyword>
<keyword id="KW-0418">Kinase</keyword>
<keyword id="KW-0545">Nucleotide biosynthesis</keyword>
<keyword id="KW-0547">Nucleotide-binding</keyword>
<keyword id="KW-0808">Transferase</keyword>
<name>KAD_STRS7</name>
<organism>
    <name type="scientific">Streptococcus equi subsp. zooepidemicus (strain H70)</name>
    <dbReference type="NCBI Taxonomy" id="553483"/>
    <lineage>
        <taxon>Bacteria</taxon>
        <taxon>Bacillati</taxon>
        <taxon>Bacillota</taxon>
        <taxon>Bacilli</taxon>
        <taxon>Lactobacillales</taxon>
        <taxon>Streptococcaceae</taxon>
        <taxon>Streptococcus</taxon>
    </lineage>
</organism>
<protein>
    <recommendedName>
        <fullName evidence="1">Adenylate kinase</fullName>
        <shortName evidence="1">AK</shortName>
        <ecNumber evidence="1">2.7.4.3</ecNumber>
    </recommendedName>
    <alternativeName>
        <fullName evidence="1">ATP-AMP transphosphorylase</fullName>
    </alternativeName>
    <alternativeName>
        <fullName evidence="1">ATP:AMP phosphotransferase</fullName>
    </alternativeName>
    <alternativeName>
        <fullName evidence="1">Adenylate monophosphate kinase</fullName>
    </alternativeName>
</protein>
<proteinExistence type="inferred from homology"/>
<gene>
    <name evidence="1" type="primary">adk</name>
    <name type="ordered locus">SZO_00710</name>
</gene>
<feature type="chain" id="PRO_1000204427" description="Adenylate kinase">
    <location>
        <begin position="1"/>
        <end position="213"/>
    </location>
</feature>
<feature type="region of interest" description="NMP" evidence="1">
    <location>
        <begin position="30"/>
        <end position="59"/>
    </location>
</feature>
<feature type="region of interest" description="LID" evidence="1">
    <location>
        <begin position="127"/>
        <end position="160"/>
    </location>
</feature>
<feature type="binding site" evidence="1">
    <location>
        <begin position="10"/>
        <end position="15"/>
    </location>
    <ligand>
        <name>ATP</name>
        <dbReference type="ChEBI" id="CHEBI:30616"/>
    </ligand>
</feature>
<feature type="binding site" evidence="1">
    <location>
        <position position="31"/>
    </location>
    <ligand>
        <name>AMP</name>
        <dbReference type="ChEBI" id="CHEBI:456215"/>
    </ligand>
</feature>
<feature type="binding site" evidence="1">
    <location>
        <position position="36"/>
    </location>
    <ligand>
        <name>AMP</name>
        <dbReference type="ChEBI" id="CHEBI:456215"/>
    </ligand>
</feature>
<feature type="binding site" evidence="1">
    <location>
        <begin position="57"/>
        <end position="59"/>
    </location>
    <ligand>
        <name>AMP</name>
        <dbReference type="ChEBI" id="CHEBI:456215"/>
    </ligand>
</feature>
<feature type="binding site" evidence="1">
    <location>
        <begin position="86"/>
        <end position="89"/>
    </location>
    <ligand>
        <name>AMP</name>
        <dbReference type="ChEBI" id="CHEBI:456215"/>
    </ligand>
</feature>
<feature type="binding site" evidence="1">
    <location>
        <position position="93"/>
    </location>
    <ligand>
        <name>AMP</name>
        <dbReference type="ChEBI" id="CHEBI:456215"/>
    </ligand>
</feature>
<feature type="binding site" evidence="1">
    <location>
        <position position="128"/>
    </location>
    <ligand>
        <name>ATP</name>
        <dbReference type="ChEBI" id="CHEBI:30616"/>
    </ligand>
</feature>
<feature type="binding site" evidence="1">
    <location>
        <begin position="137"/>
        <end position="138"/>
    </location>
    <ligand>
        <name>ATP</name>
        <dbReference type="ChEBI" id="CHEBI:30616"/>
    </ligand>
</feature>
<feature type="binding site" evidence="1">
    <location>
        <position position="157"/>
    </location>
    <ligand>
        <name>AMP</name>
        <dbReference type="ChEBI" id="CHEBI:456215"/>
    </ligand>
</feature>
<feature type="binding site" evidence="1">
    <location>
        <position position="168"/>
    </location>
    <ligand>
        <name>AMP</name>
        <dbReference type="ChEBI" id="CHEBI:456215"/>
    </ligand>
</feature>
<feature type="binding site" evidence="1">
    <location>
        <position position="196"/>
    </location>
    <ligand>
        <name>ATP</name>
        <dbReference type="ChEBI" id="CHEBI:30616"/>
    </ligand>
</feature>
<comment type="function">
    <text evidence="1">Catalyzes the reversible transfer of the terminal phosphate group between ATP and AMP. Plays an important role in cellular energy homeostasis and in adenine nucleotide metabolism.</text>
</comment>
<comment type="catalytic activity">
    <reaction evidence="1">
        <text>AMP + ATP = 2 ADP</text>
        <dbReference type="Rhea" id="RHEA:12973"/>
        <dbReference type="ChEBI" id="CHEBI:30616"/>
        <dbReference type="ChEBI" id="CHEBI:456215"/>
        <dbReference type="ChEBI" id="CHEBI:456216"/>
        <dbReference type="EC" id="2.7.4.3"/>
    </reaction>
</comment>
<comment type="pathway">
    <text evidence="1">Purine metabolism; AMP biosynthesis via salvage pathway; AMP from ADP: step 1/1.</text>
</comment>
<comment type="subunit">
    <text evidence="1">Monomer.</text>
</comment>
<comment type="subcellular location">
    <subcellularLocation>
        <location evidence="1">Cytoplasm</location>
    </subcellularLocation>
</comment>
<comment type="domain">
    <text evidence="1">Consists of three domains, a large central CORE domain and two small peripheral domains, NMPbind and LID, which undergo movements during catalysis. The LID domain closes over the site of phosphoryl transfer upon ATP binding. Assembling and dissambling the active center during each catalytic cycle provides an effective means to prevent ATP hydrolysis.</text>
</comment>
<comment type="similarity">
    <text evidence="1">Belongs to the adenylate kinase family.</text>
</comment>
<accession>C0ME26</accession>
<reference key="1">
    <citation type="journal article" date="2009" name="PLoS Pathog.">
        <title>Genomic evidence for the evolution of Streptococcus equi: host restriction, increased virulence, and genetic exchange with human pathogens.</title>
        <authorList>
            <person name="Holden M.T.G."/>
            <person name="Heather Z."/>
            <person name="Paillot R."/>
            <person name="Steward K.F."/>
            <person name="Webb K."/>
            <person name="Ainslie F."/>
            <person name="Jourdan T."/>
            <person name="Bason N.C."/>
            <person name="Holroyd N.E."/>
            <person name="Mungall K."/>
            <person name="Quail M.A."/>
            <person name="Sanders M."/>
            <person name="Simmonds M."/>
            <person name="Willey D."/>
            <person name="Brooks K."/>
            <person name="Aanensen D.M."/>
            <person name="Spratt B.G."/>
            <person name="Jolley K.A."/>
            <person name="Maiden M.C.J."/>
            <person name="Kehoe M."/>
            <person name="Chanter N."/>
            <person name="Bentley S.D."/>
            <person name="Robinson C."/>
            <person name="Maskell D.J."/>
            <person name="Parkhill J."/>
            <person name="Waller A.S."/>
        </authorList>
    </citation>
    <scope>NUCLEOTIDE SEQUENCE [LARGE SCALE GENOMIC DNA]</scope>
    <source>
        <strain>H70</strain>
    </source>
</reference>
<sequence>MNLLIMGLPGAGKGTQAAKIVETFELIHISTGDMFRAAMANQTEMGVLAKSYIDKGDLVPDEVTNGIVKERLAQADIKEKGFLLDGYPRTIEQAHALDETLEALGLTLDGVINIEVDPASLIDRLSGRIINKKTGETFHKIFNPPVGDYKEEDFYQREDDKPETVKRRLDVNIAQGEPIIKHYRQAGIVRDIDGNKDISEVFADIKKVIENLK</sequence>